<name>MATK_MORIN</name>
<sequence length="505" mass="59919">MAEFQGYLELDRSWKHDLLYPLIFREYIYVFAHDLGLNRSNLLENVGYDNKSSLLIVKRLISRMYQQNHFIISANDSNQNQLFGYNKNLYSQMISEGFAVIVEIPFSLRLVSSLKGTEIVKYYNLRSIHSIFPFLEDKFSQLNYVSDVLIPYPIHLEILVQTLRYWVKDASSLHLLRFFLHDYYNWNTLIIPNKYISIFSKSNPRLFLFLYNSHVCEYESILLFLRNQSSHLRLTSSGGFFERIYFYGKIKHPVEEVFANDSPTSLWFLEDLFMHYVRYQGKSILASKDTPLFMNKWKYYLVLLWQCHFYVWSQPGRMYINQLCKHSFSFLGYLSSMQINLSVVRSQMLENSFLMDNAMKKIDTLVPISLLIGSLDKMKFCNVLGHPVSKSTWADSSDFDIIDRFVCICRNLFHYYSGSSKKKSLYRIKYILRLSCVKTLARKHKSTVRTFLKKLGSNLLEEFFTEEEEVLSLIFPRTYSALRRSYKGRIWYLDIFCINDLVNHK</sequence>
<protein>
    <recommendedName>
        <fullName evidence="1">Maturase K</fullName>
    </recommendedName>
    <alternativeName>
        <fullName evidence="1">Intron maturase</fullName>
    </alternativeName>
</protein>
<gene>
    <name evidence="1" type="primary">matK</name>
    <name type="ordered locus">MoinCp002</name>
</gene>
<evidence type="ECO:0000255" key="1">
    <source>
        <dbReference type="HAMAP-Rule" id="MF_01390"/>
    </source>
</evidence>
<feature type="chain" id="PRO_0000355947" description="Maturase K">
    <location>
        <begin position="1"/>
        <end position="505"/>
    </location>
</feature>
<dbReference type="EMBL" id="DQ226511">
    <property type="protein sequence ID" value="ABB20939.1"/>
    <property type="molecule type" value="Genomic_DNA"/>
</dbReference>
<dbReference type="RefSeq" id="YP_762242.1">
    <property type="nucleotide sequence ID" value="NC_008359.1"/>
</dbReference>
<dbReference type="GeneID" id="4290558"/>
<dbReference type="GO" id="GO:0009507">
    <property type="term" value="C:chloroplast"/>
    <property type="evidence" value="ECO:0007669"/>
    <property type="project" value="UniProtKB-SubCell"/>
</dbReference>
<dbReference type="GO" id="GO:0003723">
    <property type="term" value="F:RNA binding"/>
    <property type="evidence" value="ECO:0007669"/>
    <property type="project" value="UniProtKB-KW"/>
</dbReference>
<dbReference type="GO" id="GO:0006397">
    <property type="term" value="P:mRNA processing"/>
    <property type="evidence" value="ECO:0007669"/>
    <property type="project" value="UniProtKB-KW"/>
</dbReference>
<dbReference type="GO" id="GO:0008380">
    <property type="term" value="P:RNA splicing"/>
    <property type="evidence" value="ECO:0007669"/>
    <property type="project" value="UniProtKB-UniRule"/>
</dbReference>
<dbReference type="GO" id="GO:0008033">
    <property type="term" value="P:tRNA processing"/>
    <property type="evidence" value="ECO:0007669"/>
    <property type="project" value="UniProtKB-KW"/>
</dbReference>
<dbReference type="HAMAP" id="MF_01390">
    <property type="entry name" value="MatK"/>
    <property type="match status" value="1"/>
</dbReference>
<dbReference type="InterPro" id="IPR024937">
    <property type="entry name" value="Domain_X"/>
</dbReference>
<dbReference type="InterPro" id="IPR002866">
    <property type="entry name" value="Maturase_MatK"/>
</dbReference>
<dbReference type="InterPro" id="IPR024942">
    <property type="entry name" value="Maturase_MatK_N"/>
</dbReference>
<dbReference type="PANTHER" id="PTHR34811">
    <property type="entry name" value="MATURASE K"/>
    <property type="match status" value="1"/>
</dbReference>
<dbReference type="PANTHER" id="PTHR34811:SF1">
    <property type="entry name" value="MATURASE K"/>
    <property type="match status" value="1"/>
</dbReference>
<dbReference type="Pfam" id="PF01348">
    <property type="entry name" value="Intron_maturas2"/>
    <property type="match status" value="1"/>
</dbReference>
<dbReference type="Pfam" id="PF01824">
    <property type="entry name" value="MatK_N"/>
    <property type="match status" value="1"/>
</dbReference>
<accession>Q09X36</accession>
<keyword id="KW-0150">Chloroplast</keyword>
<keyword id="KW-0507">mRNA processing</keyword>
<keyword id="KW-0934">Plastid</keyword>
<keyword id="KW-0694">RNA-binding</keyword>
<keyword id="KW-0819">tRNA processing</keyword>
<comment type="function">
    <text evidence="1">Usually encoded in the trnK tRNA gene intron. Probably assists in splicing its own and other chloroplast group II introns.</text>
</comment>
<comment type="subcellular location">
    <subcellularLocation>
        <location>Plastid</location>
        <location>Chloroplast</location>
    </subcellularLocation>
</comment>
<comment type="similarity">
    <text evidence="1">Belongs to the intron maturase 2 family. MatK subfamily.</text>
</comment>
<organism>
    <name type="scientific">Morus indica</name>
    <name type="common">Mulberry</name>
    <dbReference type="NCBI Taxonomy" id="248361"/>
    <lineage>
        <taxon>Eukaryota</taxon>
        <taxon>Viridiplantae</taxon>
        <taxon>Streptophyta</taxon>
        <taxon>Embryophyta</taxon>
        <taxon>Tracheophyta</taxon>
        <taxon>Spermatophyta</taxon>
        <taxon>Magnoliopsida</taxon>
        <taxon>eudicotyledons</taxon>
        <taxon>Gunneridae</taxon>
        <taxon>Pentapetalae</taxon>
        <taxon>rosids</taxon>
        <taxon>fabids</taxon>
        <taxon>Rosales</taxon>
        <taxon>Moraceae</taxon>
        <taxon>Moreae</taxon>
        <taxon>Morus</taxon>
    </lineage>
</organism>
<geneLocation type="chloroplast"/>
<proteinExistence type="inferred from homology"/>
<reference key="1">
    <citation type="submission" date="2005-09" db="EMBL/GenBank/DDBJ databases">
        <title>The chloroplast genome of mulberry: structural features and comparative analysis.</title>
        <authorList>
            <person name="Ravi V."/>
            <person name="Khurana J.P."/>
            <person name="Tyagi A.K."/>
            <person name="Khurana P."/>
        </authorList>
    </citation>
    <scope>NUCLEOTIDE SEQUENCE [LARGE SCALE GENOMIC DNA]</scope>
    <source>
        <strain>cv. K2</strain>
    </source>
</reference>